<protein>
    <recommendedName>
        <fullName>CLIP-associating protein 2</fullName>
    </recommendedName>
    <alternativeName>
        <fullName>Cytoplasmic linker-associated protein 2</fullName>
    </alternativeName>
    <alternativeName>
        <fullName>Protein Orbit homolog 2</fullName>
        <shortName>hOrbit2</shortName>
    </alternativeName>
</protein>
<keyword id="KW-0002">3D-structure</keyword>
<keyword id="KW-0025">Alternative splicing</keyword>
<keyword id="KW-0131">Cell cycle</keyword>
<keyword id="KW-0132">Cell division</keyword>
<keyword id="KW-1003">Cell membrane</keyword>
<keyword id="KW-0966">Cell projection</keyword>
<keyword id="KW-0137">Centromere</keyword>
<keyword id="KW-0158">Chromosome</keyword>
<keyword id="KW-0963">Cytoplasm</keyword>
<keyword id="KW-0206">Cytoskeleton</keyword>
<keyword id="KW-0333">Golgi apparatus</keyword>
<keyword id="KW-0995">Kinetochore</keyword>
<keyword id="KW-0472">Membrane</keyword>
<keyword id="KW-0493">Microtubule</keyword>
<keyword id="KW-0498">Mitosis</keyword>
<keyword id="KW-0597">Phosphoprotein</keyword>
<keyword id="KW-1267">Proteomics identification</keyword>
<keyword id="KW-1185">Reference proteome</keyword>
<keyword id="KW-0677">Repeat</keyword>
<dbReference type="EMBL" id="AB014527">
    <property type="protein sequence ID" value="BAA31602.2"/>
    <property type="status" value="ALT_INIT"/>
    <property type="molecule type" value="mRNA"/>
</dbReference>
<dbReference type="EMBL" id="AC093114">
    <property type="status" value="NOT_ANNOTATED_CDS"/>
    <property type="molecule type" value="Genomic_DNA"/>
</dbReference>
<dbReference type="EMBL" id="AC113170">
    <property type="status" value="NOT_ANNOTATED_CDS"/>
    <property type="molecule type" value="Genomic_DNA"/>
</dbReference>
<dbReference type="EMBL" id="AC132515">
    <property type="status" value="NOT_ANNOTATED_CDS"/>
    <property type="molecule type" value="Genomic_DNA"/>
</dbReference>
<dbReference type="EMBL" id="BC029035">
    <property type="protein sequence ID" value="AAH29035.1"/>
    <property type="molecule type" value="mRNA"/>
</dbReference>
<dbReference type="EMBL" id="BC140778">
    <property type="protein sequence ID" value="AAI40779.1"/>
    <property type="molecule type" value="mRNA"/>
</dbReference>
<dbReference type="EMBL" id="AJ288058">
    <property type="protein sequence ID" value="CAC35157.1"/>
    <property type="molecule type" value="mRNA"/>
</dbReference>
<dbReference type="EMBL" id="AJ288059">
    <property type="protein sequence ID" value="CAC35158.1"/>
    <property type="molecule type" value="mRNA"/>
</dbReference>
<dbReference type="EMBL" id="AL137636">
    <property type="protein sequence ID" value="CAB70852.1"/>
    <property type="molecule type" value="mRNA"/>
</dbReference>
<dbReference type="EMBL" id="AK024770">
    <property type="protein sequence ID" value="BAB14995.1"/>
    <property type="status" value="ALT_INIT"/>
    <property type="molecule type" value="mRNA"/>
</dbReference>
<dbReference type="CCDS" id="CCDS93234.1">
    <molecule id="O75122-1"/>
</dbReference>
<dbReference type="PIR" id="T00386">
    <property type="entry name" value="T00386"/>
</dbReference>
<dbReference type="RefSeq" id="NP_001193973.1">
    <molecule id="O75122-1"/>
    <property type="nucleotide sequence ID" value="NM_001207044.3"/>
</dbReference>
<dbReference type="RefSeq" id="NP_055912.2">
    <molecule id="O75122-3"/>
    <property type="nucleotide sequence ID" value="NM_015097.3"/>
</dbReference>
<dbReference type="PDB" id="3WOY">
    <property type="method" value="X-ray"/>
    <property type="resolution" value="2.10 A"/>
    <property type="chains" value="A=60-310"/>
</dbReference>
<dbReference type="PDB" id="5NR4">
    <property type="method" value="X-ray"/>
    <property type="resolution" value="1.20 A"/>
    <property type="chains" value="A/B=1111-1275"/>
</dbReference>
<dbReference type="PDB" id="8WHH">
    <property type="method" value="X-ray"/>
    <property type="resolution" value="3.80 A"/>
    <property type="chains" value="A/B/C/D=1053-1281"/>
</dbReference>
<dbReference type="PDB" id="8WHI">
    <property type="method" value="X-ray"/>
    <property type="resolution" value="1.85 A"/>
    <property type="chains" value="A=1053-1281"/>
</dbReference>
<dbReference type="PDB" id="8WHJ">
    <property type="method" value="X-ray"/>
    <property type="resolution" value="1.40 A"/>
    <property type="chains" value="A=1053-1282"/>
</dbReference>
<dbReference type="PDB" id="8WHK">
    <property type="method" value="X-ray"/>
    <property type="resolution" value="2.40 A"/>
    <property type="chains" value="A=1053-1281"/>
</dbReference>
<dbReference type="PDB" id="8WHL">
    <property type="method" value="X-ray"/>
    <property type="resolution" value="3.20 A"/>
    <property type="chains" value="A/B/C/D=1053-1281"/>
</dbReference>
<dbReference type="PDBsum" id="3WOY"/>
<dbReference type="PDBsum" id="5NR4"/>
<dbReference type="PDBsum" id="8WHH"/>
<dbReference type="PDBsum" id="8WHI"/>
<dbReference type="PDBsum" id="8WHJ"/>
<dbReference type="PDBsum" id="8WHK"/>
<dbReference type="PDBsum" id="8WHL"/>
<dbReference type="SMR" id="O75122"/>
<dbReference type="BioGRID" id="116743">
    <property type="interactions" value="154"/>
</dbReference>
<dbReference type="DIP" id="DIP-36804N"/>
<dbReference type="FunCoup" id="O75122">
    <property type="interactions" value="2209"/>
</dbReference>
<dbReference type="IntAct" id="O75122">
    <property type="interactions" value="106"/>
</dbReference>
<dbReference type="MINT" id="O75122"/>
<dbReference type="STRING" id="9606.ENSP00000327760"/>
<dbReference type="GlyCosmos" id="O75122">
    <property type="glycosylation" value="2 sites, 1 glycan"/>
</dbReference>
<dbReference type="GlyGen" id="O75122">
    <property type="glycosylation" value="3 sites, 1 N-linked glycan (1 site), 1 O-linked glycan (2 sites)"/>
</dbReference>
<dbReference type="iPTMnet" id="O75122"/>
<dbReference type="MetOSite" id="O75122"/>
<dbReference type="PhosphoSitePlus" id="O75122"/>
<dbReference type="SwissPalm" id="O75122"/>
<dbReference type="BioMuta" id="CLASP2"/>
<dbReference type="jPOST" id="O75122"/>
<dbReference type="MassIVE" id="O75122"/>
<dbReference type="PaxDb" id="9606-ENSP00000417518"/>
<dbReference type="PeptideAtlas" id="O75122"/>
<dbReference type="ProteomicsDB" id="27038"/>
<dbReference type="ProteomicsDB" id="49777">
    <molecule id="O75122-1"/>
</dbReference>
<dbReference type="ProteomicsDB" id="49778">
    <molecule id="O75122-2"/>
</dbReference>
<dbReference type="Pumba" id="O75122"/>
<dbReference type="Antibodypedia" id="27973">
    <property type="antibodies" value="360 antibodies from 33 providers"/>
</dbReference>
<dbReference type="DNASU" id="23122"/>
<dbReference type="Ensembl" id="ENST00000313350.10">
    <molecule id="O75122-2"/>
    <property type="protein sequence ID" value="ENSP00000324364.6"/>
    <property type="gene ID" value="ENSG00000163539.19"/>
</dbReference>
<dbReference type="Ensembl" id="ENST00000480013.6">
    <molecule id="O75122-1"/>
    <property type="protein sequence ID" value="ENSP00000417518.2"/>
    <property type="gene ID" value="ENSG00000163539.19"/>
</dbReference>
<dbReference type="GeneID" id="23122"/>
<dbReference type="KEGG" id="hsa:23122"/>
<dbReference type="UCSC" id="uc003cfv.4">
    <molecule id="O75122-1"/>
    <property type="organism name" value="human"/>
</dbReference>
<dbReference type="AGR" id="HGNC:17078"/>
<dbReference type="CTD" id="23122"/>
<dbReference type="DisGeNET" id="23122"/>
<dbReference type="GeneCards" id="CLASP2"/>
<dbReference type="HGNC" id="HGNC:17078">
    <property type="gene designation" value="CLASP2"/>
</dbReference>
<dbReference type="HPA" id="ENSG00000163539">
    <property type="expression patterns" value="Tissue enhanced (brain, retina)"/>
</dbReference>
<dbReference type="MalaCards" id="CLASP2"/>
<dbReference type="MIM" id="605853">
    <property type="type" value="gene"/>
</dbReference>
<dbReference type="neXtProt" id="NX_O75122"/>
<dbReference type="OpenTargets" id="ENSG00000163539"/>
<dbReference type="PharmGKB" id="PA38435"/>
<dbReference type="VEuPathDB" id="HostDB:ENSG00000163539"/>
<dbReference type="eggNOG" id="KOG2956">
    <property type="taxonomic scope" value="Eukaryota"/>
</dbReference>
<dbReference type="GeneTree" id="ENSGT00940000155574"/>
<dbReference type="HOGENOM" id="CLU_014496_2_0_1"/>
<dbReference type="InParanoid" id="O75122"/>
<dbReference type="OrthoDB" id="46159at2759"/>
<dbReference type="PAN-GO" id="O75122">
    <property type="GO annotations" value="7 GO annotations based on evolutionary models"/>
</dbReference>
<dbReference type="PhylomeDB" id="O75122"/>
<dbReference type="PathwayCommons" id="O75122"/>
<dbReference type="Reactome" id="R-HSA-141444">
    <property type="pathway name" value="Amplification of signal from unattached kinetochores via a MAD2 inhibitory signal"/>
</dbReference>
<dbReference type="Reactome" id="R-HSA-2467813">
    <property type="pathway name" value="Separation of Sister Chromatids"/>
</dbReference>
<dbReference type="Reactome" id="R-HSA-2500257">
    <property type="pathway name" value="Resolution of Sister Chromatid Cohesion"/>
</dbReference>
<dbReference type="Reactome" id="R-HSA-428890">
    <property type="pathway name" value="Role of ABL in ROBO-SLIT signaling"/>
</dbReference>
<dbReference type="Reactome" id="R-HSA-5663220">
    <property type="pathway name" value="RHO GTPases Activate Formins"/>
</dbReference>
<dbReference type="Reactome" id="R-HSA-68877">
    <property type="pathway name" value="Mitotic Prometaphase"/>
</dbReference>
<dbReference type="Reactome" id="R-HSA-9648025">
    <property type="pathway name" value="EML4 and NUDC in mitotic spindle formation"/>
</dbReference>
<dbReference type="SignaLink" id="O75122"/>
<dbReference type="SIGNOR" id="O75122"/>
<dbReference type="BioGRID-ORCS" id="23122">
    <property type="hits" value="24 hits in 388 CRISPR screens"/>
</dbReference>
<dbReference type="CD-CODE" id="91857CE7">
    <property type="entry name" value="Nucleolus"/>
</dbReference>
<dbReference type="CD-CODE" id="FB4E32DD">
    <property type="entry name" value="Presynaptic clusters and postsynaptic densities"/>
</dbReference>
<dbReference type="ChiTaRS" id="CLASP2">
    <property type="organism name" value="human"/>
</dbReference>
<dbReference type="EvolutionaryTrace" id="O75122"/>
<dbReference type="GeneWiki" id="CLASP2"/>
<dbReference type="GenomeRNAi" id="23122"/>
<dbReference type="Pharos" id="O75122">
    <property type="development level" value="Tbio"/>
</dbReference>
<dbReference type="PRO" id="PR:O75122"/>
<dbReference type="Proteomes" id="UP000005640">
    <property type="component" value="Chromosome 3"/>
</dbReference>
<dbReference type="RNAct" id="O75122">
    <property type="molecule type" value="protein"/>
</dbReference>
<dbReference type="Bgee" id="ENSG00000163539">
    <property type="expression patterns" value="Expressed in corpus callosum and 205 other cell types or tissues"/>
</dbReference>
<dbReference type="ExpressionAtlas" id="O75122">
    <property type="expression patterns" value="baseline and differential"/>
</dbReference>
<dbReference type="GO" id="GO:0044295">
    <property type="term" value="C:axonal growth cone"/>
    <property type="evidence" value="ECO:0000314"/>
    <property type="project" value="UniProtKB"/>
</dbReference>
<dbReference type="GO" id="GO:0045180">
    <property type="term" value="C:basal cortex"/>
    <property type="evidence" value="ECO:0000314"/>
    <property type="project" value="UniProtKB"/>
</dbReference>
<dbReference type="GO" id="GO:0005938">
    <property type="term" value="C:cell cortex"/>
    <property type="evidence" value="ECO:0000314"/>
    <property type="project" value="MGI"/>
</dbReference>
<dbReference type="GO" id="GO:0031252">
    <property type="term" value="C:cell leading edge"/>
    <property type="evidence" value="ECO:0000314"/>
    <property type="project" value="UniProtKB"/>
</dbReference>
<dbReference type="GO" id="GO:0005813">
    <property type="term" value="C:centrosome"/>
    <property type="evidence" value="ECO:0007669"/>
    <property type="project" value="UniProtKB-SubCell"/>
</dbReference>
<dbReference type="GO" id="GO:1903754">
    <property type="term" value="C:cortical microtubule plus-end"/>
    <property type="evidence" value="ECO:0000314"/>
    <property type="project" value="UniProtKB"/>
</dbReference>
<dbReference type="GO" id="GO:0005737">
    <property type="term" value="C:cytoplasm"/>
    <property type="evidence" value="ECO:0000303"/>
    <property type="project" value="UniProtKB"/>
</dbReference>
<dbReference type="GO" id="GO:0005881">
    <property type="term" value="C:cytoplasmic microtubule"/>
    <property type="evidence" value="ECO:0000314"/>
    <property type="project" value="UniProtKB"/>
</dbReference>
<dbReference type="GO" id="GO:0005829">
    <property type="term" value="C:cytosol"/>
    <property type="evidence" value="ECO:0000314"/>
    <property type="project" value="HPA"/>
</dbReference>
<dbReference type="GO" id="GO:0098978">
    <property type="term" value="C:glutamatergic synapse"/>
    <property type="evidence" value="ECO:0000314"/>
    <property type="project" value="SynGO"/>
</dbReference>
<dbReference type="GO" id="GO:0005794">
    <property type="term" value="C:Golgi apparatus"/>
    <property type="evidence" value="ECO:0000314"/>
    <property type="project" value="HPA"/>
</dbReference>
<dbReference type="GO" id="GO:0000776">
    <property type="term" value="C:kinetochore"/>
    <property type="evidence" value="ECO:0007669"/>
    <property type="project" value="UniProtKB-KW"/>
</dbReference>
<dbReference type="GO" id="GO:0005828">
    <property type="term" value="C:kinetochore microtubule"/>
    <property type="evidence" value="ECO:0000304"/>
    <property type="project" value="UniProtKB"/>
</dbReference>
<dbReference type="GO" id="GO:0016020">
    <property type="term" value="C:membrane"/>
    <property type="evidence" value="ECO:0007005"/>
    <property type="project" value="UniProtKB"/>
</dbReference>
<dbReference type="GO" id="GO:0005874">
    <property type="term" value="C:microtubule"/>
    <property type="evidence" value="ECO:0000314"/>
    <property type="project" value="UniProtKB"/>
</dbReference>
<dbReference type="GO" id="GO:0005815">
    <property type="term" value="C:microtubule organizing center"/>
    <property type="evidence" value="ECO:0000318"/>
    <property type="project" value="GO_Central"/>
</dbReference>
<dbReference type="GO" id="GO:0005886">
    <property type="term" value="C:plasma membrane"/>
    <property type="evidence" value="ECO:0000314"/>
    <property type="project" value="UniProtKB"/>
</dbReference>
<dbReference type="GO" id="GO:0032587">
    <property type="term" value="C:ruffle membrane"/>
    <property type="evidence" value="ECO:0000314"/>
    <property type="project" value="UniProtKB"/>
</dbReference>
<dbReference type="GO" id="GO:0005876">
    <property type="term" value="C:spindle microtubule"/>
    <property type="evidence" value="ECO:0000318"/>
    <property type="project" value="GO_Central"/>
</dbReference>
<dbReference type="GO" id="GO:0005802">
    <property type="term" value="C:trans-Golgi network"/>
    <property type="evidence" value="ECO:0000314"/>
    <property type="project" value="UniProtKB"/>
</dbReference>
<dbReference type="GO" id="GO:0051015">
    <property type="term" value="F:actin filament binding"/>
    <property type="evidence" value="ECO:0000314"/>
    <property type="project" value="UniProtKB"/>
</dbReference>
<dbReference type="GO" id="GO:0002162">
    <property type="term" value="F:dystroglycan binding"/>
    <property type="evidence" value="ECO:0000353"/>
    <property type="project" value="UniProtKB"/>
</dbReference>
<dbReference type="GO" id="GO:0008017">
    <property type="term" value="F:microtubule binding"/>
    <property type="evidence" value="ECO:0000314"/>
    <property type="project" value="UniProtKB"/>
</dbReference>
<dbReference type="GO" id="GO:0051010">
    <property type="term" value="F:microtubule plus-end binding"/>
    <property type="evidence" value="ECO:0000314"/>
    <property type="project" value="UniProtKB"/>
</dbReference>
<dbReference type="GO" id="GO:1990782">
    <property type="term" value="F:protein tyrosine kinase binding"/>
    <property type="evidence" value="ECO:0000353"/>
    <property type="project" value="UniProtKB"/>
</dbReference>
<dbReference type="GO" id="GO:0071711">
    <property type="term" value="P:basement membrane organization"/>
    <property type="evidence" value="ECO:0000315"/>
    <property type="project" value="UniProtKB"/>
</dbReference>
<dbReference type="GO" id="GO:0051301">
    <property type="term" value="P:cell division"/>
    <property type="evidence" value="ECO:0007669"/>
    <property type="project" value="UniProtKB-KW"/>
</dbReference>
<dbReference type="GO" id="GO:0040001">
    <property type="term" value="P:establishment of mitotic spindle localization"/>
    <property type="evidence" value="ECO:0000318"/>
    <property type="project" value="GO_Central"/>
</dbReference>
<dbReference type="GO" id="GO:0007163">
    <property type="term" value="P:establishment or maintenance of cell polarity"/>
    <property type="evidence" value="ECO:0000304"/>
    <property type="project" value="UniProtKB"/>
</dbReference>
<dbReference type="GO" id="GO:0010458">
    <property type="term" value="P:exit from mitosis"/>
    <property type="evidence" value="ECO:0000315"/>
    <property type="project" value="UniProtKB"/>
</dbReference>
<dbReference type="GO" id="GO:0007030">
    <property type="term" value="P:Golgi organization"/>
    <property type="evidence" value="ECO:0000315"/>
    <property type="project" value="UniProtKB"/>
</dbReference>
<dbReference type="GO" id="GO:0034453">
    <property type="term" value="P:microtubule anchoring"/>
    <property type="evidence" value="ECO:0000315"/>
    <property type="project" value="UniProtKB"/>
</dbReference>
<dbReference type="GO" id="GO:0000226">
    <property type="term" value="P:microtubule cytoskeleton organization"/>
    <property type="evidence" value="ECO:0000315"/>
    <property type="project" value="UniProtKB"/>
</dbReference>
<dbReference type="GO" id="GO:0007020">
    <property type="term" value="P:microtubule nucleation"/>
    <property type="evidence" value="ECO:0000315"/>
    <property type="project" value="UniProtKB"/>
</dbReference>
<dbReference type="GO" id="GO:0031023">
    <property type="term" value="P:microtubule organizing center organization"/>
    <property type="evidence" value="ECO:0000315"/>
    <property type="project" value="UniProtKB"/>
</dbReference>
<dbReference type="GO" id="GO:0090307">
    <property type="term" value="P:mitotic spindle assembly"/>
    <property type="evidence" value="ECO:0000318"/>
    <property type="project" value="GO_Central"/>
</dbReference>
<dbReference type="GO" id="GO:0007052">
    <property type="term" value="P:mitotic spindle organization"/>
    <property type="evidence" value="ECO:0000315"/>
    <property type="project" value="UniProtKB"/>
</dbReference>
<dbReference type="GO" id="GO:0051895">
    <property type="term" value="P:negative regulation of focal adhesion assembly"/>
    <property type="evidence" value="ECO:0000315"/>
    <property type="project" value="UniProtKB"/>
</dbReference>
<dbReference type="GO" id="GO:0007026">
    <property type="term" value="P:negative regulation of microtubule depolymerization"/>
    <property type="evidence" value="ECO:0000303"/>
    <property type="project" value="UniProtKB"/>
</dbReference>
<dbReference type="GO" id="GO:0051497">
    <property type="term" value="P:negative regulation of stress fiber assembly"/>
    <property type="evidence" value="ECO:0000315"/>
    <property type="project" value="UniProtKB"/>
</dbReference>
<dbReference type="GO" id="GO:1903690">
    <property type="term" value="P:negative regulation of wound healing, spreading of epidermal cells"/>
    <property type="evidence" value="ECO:0000315"/>
    <property type="project" value="UniProtKB"/>
</dbReference>
<dbReference type="GO" id="GO:0035791">
    <property type="term" value="P:platelet-derived growth factor receptor-beta signaling pathway"/>
    <property type="evidence" value="ECO:0000314"/>
    <property type="project" value="UniProtKB"/>
</dbReference>
<dbReference type="GO" id="GO:0010634">
    <property type="term" value="P:positive regulation of epithelial cell migration"/>
    <property type="evidence" value="ECO:0000315"/>
    <property type="project" value="UniProtKB"/>
</dbReference>
<dbReference type="GO" id="GO:0045921">
    <property type="term" value="P:positive regulation of exocytosis"/>
    <property type="evidence" value="ECO:0000315"/>
    <property type="project" value="UniProtKB"/>
</dbReference>
<dbReference type="GO" id="GO:0090091">
    <property type="term" value="P:positive regulation of extracellular matrix disassembly"/>
    <property type="evidence" value="ECO:0000315"/>
    <property type="project" value="UniProtKB"/>
</dbReference>
<dbReference type="GO" id="GO:0099187">
    <property type="term" value="P:presynaptic cytoskeleton organization"/>
    <property type="evidence" value="ECO:0000314"/>
    <property type="project" value="SynGO"/>
</dbReference>
<dbReference type="GO" id="GO:0032956">
    <property type="term" value="P:regulation of actin cytoskeleton organization"/>
    <property type="evidence" value="ECO:0000314"/>
    <property type="project" value="UniProtKB"/>
</dbReference>
<dbReference type="GO" id="GO:0030516">
    <property type="term" value="P:regulation of axon extension"/>
    <property type="evidence" value="ECO:0000314"/>
    <property type="project" value="UniProtKB"/>
</dbReference>
<dbReference type="GO" id="GO:0031113">
    <property type="term" value="P:regulation of microtubule polymerization"/>
    <property type="evidence" value="ECO:0000314"/>
    <property type="project" value="UniProtKB"/>
</dbReference>
<dbReference type="GO" id="GO:0031110">
    <property type="term" value="P:regulation of microtubule polymerization or depolymerization"/>
    <property type="evidence" value="ECO:0000315"/>
    <property type="project" value="UniProtKB"/>
</dbReference>
<dbReference type="GO" id="GO:0032886">
    <property type="term" value="P:regulation of microtubule-based process"/>
    <property type="evidence" value="ECO:0000315"/>
    <property type="project" value="UniProtKB"/>
</dbReference>
<dbReference type="GO" id="GO:0006903">
    <property type="term" value="P:vesicle targeting"/>
    <property type="evidence" value="ECO:0000315"/>
    <property type="project" value="UniProtKB"/>
</dbReference>
<dbReference type="FunFam" id="1.25.10.10:FF:000001">
    <property type="entry name" value="CLIP-associating protein 1 isoform 2"/>
    <property type="match status" value="1"/>
</dbReference>
<dbReference type="FunFam" id="1.25.10.10:FF:000005">
    <property type="entry name" value="CLIP-associating protein 1 isoform 2"/>
    <property type="match status" value="1"/>
</dbReference>
<dbReference type="FunFam" id="1.25.10.10:FF:000006">
    <property type="entry name" value="CLIP-associating protein 1 isoform 2"/>
    <property type="match status" value="1"/>
</dbReference>
<dbReference type="Gene3D" id="1.25.10.10">
    <property type="entry name" value="Leucine-rich Repeat Variant"/>
    <property type="match status" value="3"/>
</dbReference>
<dbReference type="InterPro" id="IPR011989">
    <property type="entry name" value="ARM-like"/>
</dbReference>
<dbReference type="InterPro" id="IPR016024">
    <property type="entry name" value="ARM-type_fold"/>
</dbReference>
<dbReference type="InterPro" id="IPR024395">
    <property type="entry name" value="CLASP_N_dom"/>
</dbReference>
<dbReference type="InterPro" id="IPR034085">
    <property type="entry name" value="TOG"/>
</dbReference>
<dbReference type="PANTHER" id="PTHR21567">
    <property type="entry name" value="CLASP"/>
    <property type="match status" value="1"/>
</dbReference>
<dbReference type="PANTHER" id="PTHR21567:SF30">
    <property type="entry name" value="CLIP-ASSOCIATING PROTEIN 2"/>
    <property type="match status" value="1"/>
</dbReference>
<dbReference type="Pfam" id="PF21040">
    <property type="entry name" value="CEP104-like_TOG"/>
    <property type="match status" value="1"/>
</dbReference>
<dbReference type="Pfam" id="PF12348">
    <property type="entry name" value="CLASP_N"/>
    <property type="match status" value="1"/>
</dbReference>
<dbReference type="SMART" id="SM01349">
    <property type="entry name" value="TOG"/>
    <property type="match status" value="3"/>
</dbReference>
<dbReference type="SUPFAM" id="SSF48371">
    <property type="entry name" value="ARM repeat"/>
    <property type="match status" value="1"/>
</dbReference>
<name>CLAP2_HUMAN</name>
<sequence length="1294" mass="141064">MAMGDDKSFDDEESVDGNRPSSAASAFKVPAPKTSGNPANSARKPGSAGGPKVGGASKEGGAGAVDEDDFIKAFTDVPSIQIYSSRELEETLNKIREILSDDKHDWDQRANALKKIRSLLVAGAAQYDCFFQHLRLLDGALKLSAKDLRSQVVREACITVAHLSTVLGNKFDHGAEAIVPTLFNLVPNSAKVMATSGCAAIRFIIRHTHVPRLIPLITSNCTSKSVPVRRRSFEFLDLLLQEWQTHSLERHAAVLVETIKKGIHDADAEARVEARKTYMGLRNHFPGEAETLYNSLEPSYQKSLQTYLKSSGSVASLPQSDRSSSSSQESLNRPFSSKWSTANPSTVAGRVSAGSSKASSLPGSLQRSRSDIDVNAAAGAKAHHAAGQSVRSGRLGAGALNAGSYASLEDTSDKLDGTASEDGRVRAKLSAPLAGMGNAKADSRGRSRTKMVSQSQPGSRSGSPGRVLTTTALSTVSSGVQRVLVNSASAQKRSKIPRSQGCSREASPSRLSVARSSRIPRPSVSQGCSREASRESSRDTSPVRSFQPLASRHHSRSTGALYAPEVYGASGPGYGISQSSRLSSSVSAMRVLNTGSDVEEAVADALKKPARRRYESYGMHSDDDANSDASSACSERSYSSRNGSIPTYMRQTEDVAEVLNRCASSNWSERKEGLLGLQNLLKNQRTLSRVELKRLCEIFTRMFADPHGKRVFSMFLETLVDFIQVHKDDLQDWLFVLLTQLLKKMGADLLGSVQAKVQKALDVTRESFPNDLQFNILMRFTVDQTQTPSLKVKVAILKYIETLAKQMDPGDFINSSETRLAVSRVITWTTEPKSSDVRKAAQSVLISLFELNTPEFTMLLGALPKTFQDGATKLLHNHLRNTGNGTQSSMGSPLTRPTPRSPANWSSPLTSPTNTSQNTLSPSAFDYDTENMNSEDIYSSLRGVTEAIQNFSFRSQEDMNEPLKRDSKKDDGDSMCGGPGMSDPRAGGDATDSSQTALDNKASLLHSMPTHSSPRSRDYNPYNYSDSISPFNKSALKEAMFDDDADQFPDDLSLDHSDLVAELLKELSNHNERVEERKIALYELMKLTQEESFSVWDEHFKTILLLLLETLGDKEPTIRALALKVLREILRHQPARFKNYAELTVMKTLEAHKDPHKEVVRSAEEAASVLATSISPEQCIKVLCPIIQTADYPINLAAIKMQTKVIERVSKETLNLLLPEIMPGLIQGYDNSESSVRKACVFCLVAVHAVIGDELKPHLSQLTGSKMKLLNLYIKRAQTGSGGADPTTDVSGQS</sequence>
<proteinExistence type="evidence at protein level"/>
<reference key="1">
    <citation type="journal article" date="1998" name="DNA Res.">
        <title>Prediction of the coding sequences of unidentified human genes. X. The complete sequences of 100 new cDNA clones from brain which can code for large proteins in vitro.</title>
        <authorList>
            <person name="Ishikawa K."/>
            <person name="Nagase T."/>
            <person name="Suyama M."/>
            <person name="Miyajima N."/>
            <person name="Tanaka A."/>
            <person name="Kotani H."/>
            <person name="Nomura N."/>
            <person name="Ohara O."/>
        </authorList>
    </citation>
    <scope>NUCLEOTIDE SEQUENCE [LARGE SCALE MRNA] (ISOFORM 1)</scope>
    <source>
        <tissue>Brain</tissue>
    </source>
</reference>
<reference key="2">
    <citation type="journal article" date="2006" name="Nature">
        <title>The DNA sequence, annotation and analysis of human chromosome 3.</title>
        <authorList>
            <person name="Muzny D.M."/>
            <person name="Scherer S.E."/>
            <person name="Kaul R."/>
            <person name="Wang J."/>
            <person name="Yu J."/>
            <person name="Sudbrak R."/>
            <person name="Buhay C.J."/>
            <person name="Chen R."/>
            <person name="Cree A."/>
            <person name="Ding Y."/>
            <person name="Dugan-Rocha S."/>
            <person name="Gill R."/>
            <person name="Gunaratne P."/>
            <person name="Harris R.A."/>
            <person name="Hawes A.C."/>
            <person name="Hernandez J."/>
            <person name="Hodgson A.V."/>
            <person name="Hume J."/>
            <person name="Jackson A."/>
            <person name="Khan Z.M."/>
            <person name="Kovar-Smith C."/>
            <person name="Lewis L.R."/>
            <person name="Lozado R.J."/>
            <person name="Metzker M.L."/>
            <person name="Milosavljevic A."/>
            <person name="Miner G.R."/>
            <person name="Morgan M.B."/>
            <person name="Nazareth L.V."/>
            <person name="Scott G."/>
            <person name="Sodergren E."/>
            <person name="Song X.-Z."/>
            <person name="Steffen D."/>
            <person name="Wei S."/>
            <person name="Wheeler D.A."/>
            <person name="Wright M.W."/>
            <person name="Worley K.C."/>
            <person name="Yuan Y."/>
            <person name="Zhang Z."/>
            <person name="Adams C.Q."/>
            <person name="Ansari-Lari M.A."/>
            <person name="Ayele M."/>
            <person name="Brown M.J."/>
            <person name="Chen G."/>
            <person name="Chen Z."/>
            <person name="Clendenning J."/>
            <person name="Clerc-Blankenburg K.P."/>
            <person name="Chen R."/>
            <person name="Chen Z."/>
            <person name="Davis C."/>
            <person name="Delgado O."/>
            <person name="Dinh H.H."/>
            <person name="Dong W."/>
            <person name="Draper H."/>
            <person name="Ernst S."/>
            <person name="Fu G."/>
            <person name="Gonzalez-Garay M.L."/>
            <person name="Garcia D.K."/>
            <person name="Gillett W."/>
            <person name="Gu J."/>
            <person name="Hao B."/>
            <person name="Haugen E."/>
            <person name="Havlak P."/>
            <person name="He X."/>
            <person name="Hennig S."/>
            <person name="Hu S."/>
            <person name="Huang W."/>
            <person name="Jackson L.R."/>
            <person name="Jacob L.S."/>
            <person name="Kelly S.H."/>
            <person name="Kube M."/>
            <person name="Levy R."/>
            <person name="Li Z."/>
            <person name="Liu B."/>
            <person name="Liu J."/>
            <person name="Liu W."/>
            <person name="Lu J."/>
            <person name="Maheshwari M."/>
            <person name="Nguyen B.-V."/>
            <person name="Okwuonu G.O."/>
            <person name="Palmeiri A."/>
            <person name="Pasternak S."/>
            <person name="Perez L.M."/>
            <person name="Phelps K.A."/>
            <person name="Plopper F.J."/>
            <person name="Qiang B."/>
            <person name="Raymond C."/>
            <person name="Rodriguez R."/>
            <person name="Saenphimmachak C."/>
            <person name="Santibanez J."/>
            <person name="Shen H."/>
            <person name="Shen Y."/>
            <person name="Subramanian S."/>
            <person name="Tabor P.E."/>
            <person name="Verduzco D."/>
            <person name="Waldron L."/>
            <person name="Wang J."/>
            <person name="Wang J."/>
            <person name="Wang Q."/>
            <person name="Williams G.A."/>
            <person name="Wong G.K.-S."/>
            <person name="Yao Z."/>
            <person name="Zhang J."/>
            <person name="Zhang X."/>
            <person name="Zhao G."/>
            <person name="Zhou J."/>
            <person name="Zhou Y."/>
            <person name="Nelson D."/>
            <person name="Lehrach H."/>
            <person name="Reinhardt R."/>
            <person name="Naylor S.L."/>
            <person name="Yang H."/>
            <person name="Olson M."/>
            <person name="Weinstock G."/>
            <person name="Gibbs R.A."/>
        </authorList>
    </citation>
    <scope>NUCLEOTIDE SEQUENCE [LARGE SCALE GENOMIC DNA]</scope>
</reference>
<reference key="3">
    <citation type="journal article" date="2004" name="Genome Res.">
        <title>The status, quality, and expansion of the NIH full-length cDNA project: the Mammalian Gene Collection (MGC).</title>
        <authorList>
            <consortium name="The MGC Project Team"/>
        </authorList>
    </citation>
    <scope>NUCLEOTIDE SEQUENCE [LARGE SCALE MRNA] (ISOFORMS 2 AND 3)</scope>
    <source>
        <tissue>Brain</tissue>
    </source>
</reference>
<reference key="4">
    <citation type="journal article" date="2001" name="Cell">
        <title>Clasps are CLIP-115 and -170 associating proteins involved in the regional regulation of microtubule dynamics in motile fibroblasts.</title>
        <authorList>
            <person name="Akhmanova A."/>
            <person name="Hoogenraad C.C."/>
            <person name="Drabek K."/>
            <person name="Stepanova T."/>
            <person name="Dortland B."/>
            <person name="Verkerk T."/>
            <person name="Vermeulen W."/>
            <person name="Burgering B.M."/>
            <person name="de Zeeuw C.I."/>
            <person name="Grosveld F."/>
            <person name="Galjart N."/>
        </authorList>
    </citation>
    <scope>NUCLEOTIDE SEQUENCE [MRNA] OF 1-9 (ISOFORM 1)</scope>
    <scope>NUCLEOTIDE SEQUENCE [MRNA] OF 1-15 (ISOFORM 2)</scope>
    <scope>FUNCTION</scope>
    <scope>ALTERNATIVE SPLICING</scope>
    <scope>SUBCELLULAR LOCATION</scope>
    <scope>INTERACTION WITH CLIP2; MICROTUBULES AND RSN</scope>
    <source>
        <tissue>Brain</tissue>
    </source>
</reference>
<reference key="5">
    <citation type="journal article" date="2007" name="BMC Genomics">
        <title>The full-ORF clone resource of the German cDNA consortium.</title>
        <authorList>
            <person name="Bechtel S."/>
            <person name="Rosenfelder H."/>
            <person name="Duda A."/>
            <person name="Schmidt C.P."/>
            <person name="Ernst U."/>
            <person name="Wellenreuther R."/>
            <person name="Mehrle A."/>
            <person name="Schuster C."/>
            <person name="Bahr A."/>
            <person name="Bloecker H."/>
            <person name="Heubner D."/>
            <person name="Hoerlein A."/>
            <person name="Michel G."/>
            <person name="Wedler H."/>
            <person name="Koehrer K."/>
            <person name="Ottenwaelder B."/>
            <person name="Poustka A."/>
            <person name="Wiemann S."/>
            <person name="Schupp I."/>
        </authorList>
    </citation>
    <scope>NUCLEOTIDE SEQUENCE [LARGE SCALE MRNA] OF 939-1294 (ISOFORM 1)</scope>
    <source>
        <tissue>Testis</tissue>
    </source>
</reference>
<reference key="6">
    <citation type="journal article" date="2004" name="Nat. Genet.">
        <title>Complete sequencing and characterization of 21,243 full-length human cDNAs.</title>
        <authorList>
            <person name="Ota T."/>
            <person name="Suzuki Y."/>
            <person name="Nishikawa T."/>
            <person name="Otsuki T."/>
            <person name="Sugiyama T."/>
            <person name="Irie R."/>
            <person name="Wakamatsu A."/>
            <person name="Hayashi K."/>
            <person name="Sato H."/>
            <person name="Nagai K."/>
            <person name="Kimura K."/>
            <person name="Makita H."/>
            <person name="Sekine M."/>
            <person name="Obayashi M."/>
            <person name="Nishi T."/>
            <person name="Shibahara T."/>
            <person name="Tanaka T."/>
            <person name="Ishii S."/>
            <person name="Yamamoto J."/>
            <person name="Saito K."/>
            <person name="Kawai Y."/>
            <person name="Isono Y."/>
            <person name="Nakamura Y."/>
            <person name="Nagahari K."/>
            <person name="Murakami K."/>
            <person name="Yasuda T."/>
            <person name="Iwayanagi T."/>
            <person name="Wagatsuma M."/>
            <person name="Shiratori A."/>
            <person name="Sudo H."/>
            <person name="Hosoiri T."/>
            <person name="Kaku Y."/>
            <person name="Kodaira H."/>
            <person name="Kondo H."/>
            <person name="Sugawara M."/>
            <person name="Takahashi M."/>
            <person name="Kanda K."/>
            <person name="Yokoi T."/>
            <person name="Furuya T."/>
            <person name="Kikkawa E."/>
            <person name="Omura Y."/>
            <person name="Abe K."/>
            <person name="Kamihara K."/>
            <person name="Katsuta N."/>
            <person name="Sato K."/>
            <person name="Tanikawa M."/>
            <person name="Yamazaki M."/>
            <person name="Ninomiya K."/>
            <person name="Ishibashi T."/>
            <person name="Yamashita H."/>
            <person name="Murakawa K."/>
            <person name="Fujimori K."/>
            <person name="Tanai H."/>
            <person name="Kimata M."/>
            <person name="Watanabe M."/>
            <person name="Hiraoka S."/>
            <person name="Chiba Y."/>
            <person name="Ishida S."/>
            <person name="Ono Y."/>
            <person name="Takiguchi S."/>
            <person name="Watanabe S."/>
            <person name="Yosida M."/>
            <person name="Hotuta T."/>
            <person name="Kusano J."/>
            <person name="Kanehori K."/>
            <person name="Takahashi-Fujii A."/>
            <person name="Hara H."/>
            <person name="Tanase T.-O."/>
            <person name="Nomura Y."/>
            <person name="Togiya S."/>
            <person name="Komai F."/>
            <person name="Hara R."/>
            <person name="Takeuchi K."/>
            <person name="Arita M."/>
            <person name="Imose N."/>
            <person name="Musashino K."/>
            <person name="Yuuki H."/>
            <person name="Oshima A."/>
            <person name="Sasaki N."/>
            <person name="Aotsuka S."/>
            <person name="Yoshikawa Y."/>
            <person name="Matsunawa H."/>
            <person name="Ichihara T."/>
            <person name="Shiohata N."/>
            <person name="Sano S."/>
            <person name="Moriya S."/>
            <person name="Momiyama H."/>
            <person name="Satoh N."/>
            <person name="Takami S."/>
            <person name="Terashima Y."/>
            <person name="Suzuki O."/>
            <person name="Nakagawa S."/>
            <person name="Senoh A."/>
            <person name="Mizoguchi H."/>
            <person name="Goto Y."/>
            <person name="Shimizu F."/>
            <person name="Wakebe H."/>
            <person name="Hishigaki H."/>
            <person name="Watanabe T."/>
            <person name="Sugiyama A."/>
            <person name="Takemoto M."/>
            <person name="Kawakami B."/>
            <person name="Yamazaki M."/>
            <person name="Watanabe K."/>
            <person name="Kumagai A."/>
            <person name="Itakura S."/>
            <person name="Fukuzumi Y."/>
            <person name="Fujimori Y."/>
            <person name="Komiyama M."/>
            <person name="Tashiro H."/>
            <person name="Tanigami A."/>
            <person name="Fujiwara T."/>
            <person name="Ono T."/>
            <person name="Yamada K."/>
            <person name="Fujii Y."/>
            <person name="Ozaki K."/>
            <person name="Hirao M."/>
            <person name="Ohmori Y."/>
            <person name="Kawabata A."/>
            <person name="Hikiji T."/>
            <person name="Kobatake N."/>
            <person name="Inagaki H."/>
            <person name="Ikema Y."/>
            <person name="Okamoto S."/>
            <person name="Okitani R."/>
            <person name="Kawakami T."/>
            <person name="Noguchi S."/>
            <person name="Itoh T."/>
            <person name="Shigeta K."/>
            <person name="Senba T."/>
            <person name="Matsumura K."/>
            <person name="Nakajima Y."/>
            <person name="Mizuno T."/>
            <person name="Morinaga M."/>
            <person name="Sasaki M."/>
            <person name="Togashi T."/>
            <person name="Oyama M."/>
            <person name="Hata H."/>
            <person name="Watanabe M."/>
            <person name="Komatsu T."/>
            <person name="Mizushima-Sugano J."/>
            <person name="Satoh T."/>
            <person name="Shirai Y."/>
            <person name="Takahashi Y."/>
            <person name="Nakagawa K."/>
            <person name="Okumura K."/>
            <person name="Nagase T."/>
            <person name="Nomura N."/>
            <person name="Kikuchi H."/>
            <person name="Masuho Y."/>
            <person name="Yamashita R."/>
            <person name="Nakai K."/>
            <person name="Yada T."/>
            <person name="Nakamura Y."/>
            <person name="Ohara O."/>
            <person name="Isogai T."/>
            <person name="Sugano S."/>
        </authorList>
    </citation>
    <scope>NUCLEOTIDE SEQUENCE [LARGE SCALE MRNA] OF 1128-1294 (ISOFORM 1)</scope>
</reference>
<reference key="7">
    <citation type="journal article" date="2004" name="Neuron">
        <title>The microtubule plus end tracking protein Orbit/MAST/CLASP acts downstream of the tyrosine kinase Abl in mediating axon guidance.</title>
        <authorList>
            <person name="Lee H."/>
            <person name="Engel U."/>
            <person name="Rusch J."/>
            <person name="Scherrer S."/>
            <person name="Sheard K."/>
            <person name="Van Vactor D."/>
        </authorList>
    </citation>
    <scope>SUBCELLULAR LOCATION</scope>
</reference>
<reference key="8">
    <citation type="journal article" date="2005" name="J. Cell Biol.">
        <title>CLASP1 and CLASP2 bind to EB1 and regulate microtubule plus-end dynamics at the cell cortex.</title>
        <authorList>
            <person name="Mimori-Kiyosue Y."/>
            <person name="Grigoriev I."/>
            <person name="Lansbergen G."/>
            <person name="Sasaki H."/>
            <person name="Matsui C."/>
            <person name="Severin F."/>
            <person name="Galjart N."/>
            <person name="Grosveld F."/>
            <person name="Vorobjev I."/>
            <person name="Tsukita S."/>
            <person name="Akhmanova A."/>
        </authorList>
    </citation>
    <scope>FUNCTION</scope>
    <scope>INTERACTION WITH MAPRE1; MAPRE3; MICROTUBULES AND RSN</scope>
    <scope>SUBCELLULAR LOCATION</scope>
</reference>
<reference key="9">
    <citation type="journal article" date="2005" name="J. Cell Biol.">
        <title>Spatial regulation of CLASP affinity for microtubules by Rac1 and GSK3beta in migrating epithelial cells.</title>
        <authorList>
            <person name="Wittmann T."/>
            <person name="Waterman-Storer C.M."/>
        </authorList>
    </citation>
    <scope>INTERACTION WITH MICROTUBULES</scope>
    <scope>SUBCELLULAR LOCATION</scope>
    <scope>PHOSPHORYLATION BY GSK3B</scope>
</reference>
<reference key="10">
    <citation type="journal article" date="2005" name="J. Cell Biol.">
        <authorList>
            <person name="Wittmann T."/>
            <person name="Waterman-Storer C.M."/>
        </authorList>
    </citation>
    <scope>ERRATUM OF PUBMED:15955847</scope>
</reference>
<reference key="11">
    <citation type="journal article" date="2006" name="Dev. Cell">
        <title>CLASPs attach microtubule plus ends to the cell cortex through a complex with LL5beta.</title>
        <authorList>
            <person name="Lansbergen G."/>
            <person name="Grigoriev I."/>
            <person name="Mimori-Kiyosue Y."/>
            <person name="Ohtsuka T."/>
            <person name="Higa S."/>
            <person name="Kitajima I."/>
            <person name="Demmers J."/>
            <person name="Galjart N."/>
            <person name="Houtsmuller A.B."/>
            <person name="Grosveld F."/>
            <person name="Akhmanova A."/>
        </authorList>
    </citation>
    <scope>FUNCTION</scope>
    <scope>IDENTIFICATION BY MASS SPECTROMETRY</scope>
    <scope>INTERACTION WITH ERC1; PHLDB2 AND RSN</scope>
    <scope>SUBCELLULAR LOCATION</scope>
</reference>
<reference key="12">
    <citation type="journal article" date="2006" name="Genes Cells">
        <title>Mammalian CLASPs are required for mitotic spindle organization and kinetochore alignment.</title>
        <authorList>
            <person name="Mimori-Kiyosue Y."/>
            <person name="Grigoriev I."/>
            <person name="Sasaki H."/>
            <person name="Matsui C."/>
            <person name="Akhmanova A."/>
            <person name="Tsukita S."/>
            <person name="Vorobjev I."/>
        </authorList>
    </citation>
    <scope>FUNCTION</scope>
    <scope>SUBCELLULAR LOCATION</scope>
</reference>
<reference key="13">
    <citation type="journal article" date="2006" name="Mol. Biol. Cell">
        <title>Mammalian CLASP1 and CLASP2 cooperate to ensure mitotic fidelity by regulating spindle and kinetochore function.</title>
        <authorList>
            <person name="Pereira A.L."/>
            <person name="Pereira A.J."/>
            <person name="Maia A.R.R."/>
            <person name="Drabek K."/>
            <person name="Sayas C.L."/>
            <person name="Hergert P.J."/>
            <person name="Lince-Faria M."/>
            <person name="Matos I."/>
            <person name="Duque C."/>
            <person name="Stepanova T."/>
            <person name="Rieder C.L."/>
            <person name="Earnshaw W.C."/>
            <person name="Galjart N."/>
            <person name="Maiato H."/>
        </authorList>
    </citation>
    <scope>FUNCTION</scope>
    <scope>SUBCELLULAR LOCATION</scope>
</reference>
<reference key="14">
    <citation type="journal article" date="2007" name="Dev. Cell">
        <title>Asymmetric CLASP-dependent nucleation of noncentrosomal microtubules at the trans-Golgi network.</title>
        <authorList>
            <person name="Efimov A."/>
            <person name="Kharitonov A."/>
            <person name="Efimova N."/>
            <person name="Loncarek J."/>
            <person name="Miller P.M."/>
            <person name="Andreyeva N."/>
            <person name="Gleeson P."/>
            <person name="Galjart N."/>
            <person name="Maia A.R."/>
            <person name="McLeod I.X."/>
            <person name="Yates J.R. III"/>
            <person name="Maiato H."/>
            <person name="Khodjakov A."/>
            <person name="Akhmanova A."/>
            <person name="Kaverina I."/>
        </authorList>
    </citation>
    <scope>FUNCTION</scope>
    <scope>INTERACTION WITH GCC2</scope>
    <scope>SUBCELLULAR LOCATION</scope>
</reference>
<reference key="15">
    <citation type="journal article" date="2007" name="Science">
        <title>ATM and ATR substrate analysis reveals extensive protein networks responsive to DNA damage.</title>
        <authorList>
            <person name="Matsuoka S."/>
            <person name="Ballif B.A."/>
            <person name="Smogorzewska A."/>
            <person name="McDonald E.R. III"/>
            <person name="Hurov K.E."/>
            <person name="Luo J."/>
            <person name="Bakalarski C.E."/>
            <person name="Zhao Z."/>
            <person name="Solimini N."/>
            <person name="Lerenthal Y."/>
            <person name="Shiloh Y."/>
            <person name="Gygi S.P."/>
            <person name="Elledge S.J."/>
        </authorList>
    </citation>
    <scope>IDENTIFICATION BY MASS SPECTROMETRY [LARGE SCALE ANALYSIS]</scope>
    <source>
        <tissue>Embryonic kidney</tissue>
    </source>
</reference>
<reference key="16">
    <citation type="journal article" date="2008" name="J. Proteome Res.">
        <title>Phosphorylation analysis of primary human T lymphocytes using sequential IMAC and titanium oxide enrichment.</title>
        <authorList>
            <person name="Carrascal M."/>
            <person name="Ovelleiro D."/>
            <person name="Casas V."/>
            <person name="Gay M."/>
            <person name="Abian J."/>
        </authorList>
    </citation>
    <scope>IDENTIFICATION BY MASS SPECTROMETRY [LARGE SCALE ANALYSIS]</scope>
    <source>
        <tissue>T-cell</tissue>
    </source>
</reference>
<reference key="17">
    <citation type="journal article" date="2008" name="Proc. Natl. Acad. Sci. U.S.A.">
        <title>A quantitative atlas of mitotic phosphorylation.</title>
        <authorList>
            <person name="Dephoure N."/>
            <person name="Zhou C."/>
            <person name="Villen J."/>
            <person name="Beausoleil S.A."/>
            <person name="Bakalarski C.E."/>
            <person name="Elledge S.J."/>
            <person name="Gygi S.P."/>
        </authorList>
    </citation>
    <scope>PHOSPHORYLATION [LARGE SCALE ANALYSIS] AT SER-370; SER-525; SER-529; SER-596 AND SER-1029</scope>
    <scope>IDENTIFICATION BY MASS SPECTROMETRY [LARGE SCALE ANALYSIS]</scope>
    <source>
        <tissue>Cervix carcinoma</tissue>
    </source>
</reference>
<reference key="18">
    <citation type="journal article" date="2009" name="Anal. Chem.">
        <title>Lys-N and trypsin cover complementary parts of the phosphoproteome in a refined SCX-based approach.</title>
        <authorList>
            <person name="Gauci S."/>
            <person name="Helbig A.O."/>
            <person name="Slijper M."/>
            <person name="Krijgsveld J."/>
            <person name="Heck A.J."/>
            <person name="Mohammed S."/>
        </authorList>
    </citation>
    <scope>IDENTIFICATION BY MASS SPECTROMETRY [LARGE SCALE ANALYSIS]</scope>
</reference>
<reference key="19">
    <citation type="journal article" date="2009" name="Cell">
        <title>An EB1-binding motif acts as a microtubule tip localization signal.</title>
        <authorList>
            <person name="Honnappa S."/>
            <person name="Gouveia S.M."/>
            <person name="Weisbrich A."/>
            <person name="Damberger F.F."/>
            <person name="Bhavesh N.S."/>
            <person name="Jawhari H."/>
            <person name="Grigoriev I."/>
            <person name="van Rijssel F.J."/>
            <person name="Buey R.M."/>
            <person name="Lawera A."/>
            <person name="Jelesarov I."/>
            <person name="Winkler F.K."/>
            <person name="Wuthrich K."/>
            <person name="Akhmanova A."/>
            <person name="Steinmetz M.O."/>
        </authorList>
    </citation>
    <scope>INTERACTION WITH MAPRE1</scope>
    <scope>SUBCELLULAR LOCATION</scope>
    <scope>DOMAIN MICROTUBULE TIP LOCALIZATION SIGNAL</scope>
    <scope>MUTAGENESIS OF 496-ILE-PRO-497 AND 519-ILE-PRO-520</scope>
</reference>
<reference key="20">
    <citation type="journal article" date="2009" name="Sci. Signal.">
        <title>Quantitative phosphoproteomic analysis of T cell receptor signaling reveals system-wide modulation of protein-protein interactions.</title>
        <authorList>
            <person name="Mayya V."/>
            <person name="Lundgren D.H."/>
            <person name="Hwang S.-I."/>
            <person name="Rezaul K."/>
            <person name="Wu L."/>
            <person name="Eng J.K."/>
            <person name="Rodionov V."/>
            <person name="Han D.K."/>
        </authorList>
    </citation>
    <scope>PHOSPHORYLATION [LARGE SCALE ANALYSIS] AT SER-370; SER-596 AND SER-1029</scope>
    <scope>IDENTIFICATION BY MASS SPECTROMETRY [LARGE SCALE ANALYSIS]</scope>
    <source>
        <tissue>Leukemic T-cell</tissue>
    </source>
</reference>
<reference key="21">
    <citation type="journal article" date="2010" name="Proc. Natl. Acad. Sci. U.S.A.">
        <title>ErbB2 receptor controls microtubule capture by recruiting ACF7 to the plasma membrane of migrating cells.</title>
        <authorList>
            <person name="Zaoui K."/>
            <person name="Benseddik K."/>
            <person name="Daou P."/>
            <person name="Salaun D."/>
            <person name="Badache A."/>
        </authorList>
    </citation>
    <scope>FUNCTION</scope>
    <scope>SUBCELLULAR LOCATION</scope>
</reference>
<reference key="22">
    <citation type="journal article" date="2010" name="Sci. Signal.">
        <title>Quantitative phosphoproteomics reveals widespread full phosphorylation site occupancy during mitosis.</title>
        <authorList>
            <person name="Olsen J.V."/>
            <person name="Vermeulen M."/>
            <person name="Santamaria A."/>
            <person name="Kumar C."/>
            <person name="Miller M.L."/>
            <person name="Jensen L.J."/>
            <person name="Gnad F."/>
            <person name="Cox J."/>
            <person name="Jensen T.S."/>
            <person name="Nigg E.A."/>
            <person name="Brunak S."/>
            <person name="Mann M."/>
        </authorList>
    </citation>
    <scope>PHOSPHORYLATION [LARGE SCALE ANALYSIS] AT SER-1029</scope>
    <scope>IDENTIFICATION BY MASS SPECTROMETRY [LARGE SCALE ANALYSIS]</scope>
    <source>
        <tissue>Cervix carcinoma</tissue>
    </source>
</reference>
<reference key="23">
    <citation type="journal article" date="2011" name="BMC Syst. Biol.">
        <title>Initial characterization of the human central proteome.</title>
        <authorList>
            <person name="Burkard T.R."/>
            <person name="Planyavsky M."/>
            <person name="Kaupe I."/>
            <person name="Breitwieser F.P."/>
            <person name="Buerckstuemmer T."/>
            <person name="Bennett K.L."/>
            <person name="Superti-Furga G."/>
            <person name="Colinge J."/>
        </authorList>
    </citation>
    <scope>IDENTIFICATION BY MASS SPECTROMETRY [LARGE SCALE ANALYSIS]</scope>
</reference>
<reference key="24">
    <citation type="journal article" date="2011" name="Sci. Signal.">
        <title>System-wide temporal characterization of the proteome and phosphoproteome of human embryonic stem cell differentiation.</title>
        <authorList>
            <person name="Rigbolt K.T."/>
            <person name="Prokhorova T.A."/>
            <person name="Akimov V."/>
            <person name="Henningsen J."/>
            <person name="Johansen P.T."/>
            <person name="Kratchmarova I."/>
            <person name="Kassem M."/>
            <person name="Mann M."/>
            <person name="Olsen J.V."/>
            <person name="Blagoev B."/>
        </authorList>
    </citation>
    <scope>PHOSPHORYLATION [LARGE SCALE ANALYSIS] AT SER-8; SER-370; SER-455 AND SER-596</scope>
    <scope>IDENTIFICATION BY MASS SPECTROMETRY [LARGE SCALE ANALYSIS]</scope>
</reference>
<reference key="25">
    <citation type="journal article" date="2013" name="J. Proteome Res.">
        <title>Toward a comprehensive characterization of a human cancer cell phosphoproteome.</title>
        <authorList>
            <person name="Zhou H."/>
            <person name="Di Palma S."/>
            <person name="Preisinger C."/>
            <person name="Peng M."/>
            <person name="Polat A.N."/>
            <person name="Heck A.J."/>
            <person name="Mohammed S."/>
        </authorList>
    </citation>
    <scope>PHOSPHORYLATION [LARGE SCALE ANALYSIS] AT SER-327; SER-330; SER-360; SER-370; SER-459; SER-463; SER-478; SER-489; SER-507; SER-525; SER-529; SER-585; SER-587; SER-596; SER-621; THR-787; SER-892; SER-952; SER-955; SER-1013 AND SER-1029</scope>
    <scope>IDENTIFICATION BY MASS SPECTROMETRY [LARGE SCALE ANALYSIS]</scope>
    <source>
        <tissue>Cervix carcinoma</tissue>
        <tissue>Erythroleukemia</tissue>
    </source>
</reference>
<reference key="26">
    <citation type="journal article" date="2014" name="J. Proteomics">
        <title>An enzyme assisted RP-RPLC approach for in-depth analysis of human liver phosphoproteome.</title>
        <authorList>
            <person name="Bian Y."/>
            <person name="Song C."/>
            <person name="Cheng K."/>
            <person name="Dong M."/>
            <person name="Wang F."/>
            <person name="Huang J."/>
            <person name="Sun D."/>
            <person name="Wang L."/>
            <person name="Ye M."/>
            <person name="Zou H."/>
        </authorList>
    </citation>
    <scope>PHOSPHORYLATION [LARGE SCALE ANALYSIS] AT SER-316</scope>
    <scope>IDENTIFICATION BY MASS SPECTROMETRY [LARGE SCALE ANALYSIS]</scope>
    <source>
        <tissue>Liver</tissue>
    </source>
</reference>
<reference key="27">
    <citation type="journal article" date="2016" name="Elife">
        <title>Talin-KANK1 interaction controls the recruitment of cortical microtubule stabilizing complexes to focal adhesions.</title>
        <authorList>
            <person name="Bouchet B.P."/>
            <person name="Gough R.E."/>
            <person name="Ammon Y.C."/>
            <person name="van de Willige D."/>
            <person name="Post H."/>
            <person name="Jacquemet G."/>
            <person name="Altelaar A.M."/>
            <person name="Heck A.J."/>
            <person name="Goult B.T."/>
            <person name="Akhmanova A."/>
        </authorList>
    </citation>
    <scope>SUBCELLULAR LOCATION</scope>
</reference>
<reference key="28">
    <citation type="journal article" date="2021" name="Chromosome Res.">
        <title>SOGA1 and SOGA2/MTCL1 are CLASP-interacting proteins required for faithful chromosome segregation in human cells.</title>
        <authorList>
            <person name="Ferreira L.T."/>
            <person name="Logarinho E."/>
            <person name="Macedo J.C."/>
            <person name="Maia A.R.R."/>
            <person name="Maiato H."/>
        </authorList>
    </citation>
    <scope>INTERACTION WITH MTCL2 AND MTCL1</scope>
</reference>
<reference key="29">
    <citation type="journal article" date="2015" name="J. Mol. Biol.">
        <title>CLASP2 has two distinct TOG domains that contribute differently to microtubule dynamics.</title>
        <authorList>
            <person name="Maki T."/>
            <person name="Grimaldi A.D."/>
            <person name="Fuchigami S."/>
            <person name="Kaverina I."/>
            <person name="Hayashi I."/>
        </authorList>
    </citation>
    <scope>X-RAY CRYSTALLOGRAPHY (2.10 ANGSTROMS) OF 60-310</scope>
    <scope>FUNCTION</scope>
    <scope>SUBUNIT</scope>
    <scope>INTERACTION WITH MAPRE1</scope>
    <scope>DOMAIN</scope>
    <scope>MUTAGENESIS OF TRP-106; LYS-191; 496-ILE-PRO-497; SER-499; SER-507; 519-ILE-PRO-520; SER-525; SER-529; SER-533; SER-537; SER-541; TRP-667; LYS-833; ARG-838 AND LYS-839</scope>
</reference>
<accession>O75122</accession>
<accession>B2RTR1</accession>
<accession>F5H604</accession>
<accession>Q7L8F6</accession>
<accession>Q8N6R6</accession>
<accession>Q9BQT3</accession>
<accession>Q9BQT4</accession>
<accession>Q9H7A3</accession>
<accession>Q9NSZ2</accession>
<evidence type="ECO:0000250" key="1">
    <source>
        <dbReference type="UniProtKB" id="Q8BRT1"/>
    </source>
</evidence>
<evidence type="ECO:0000250" key="2">
    <source>
        <dbReference type="UniProtKB" id="Q99JD4"/>
    </source>
</evidence>
<evidence type="ECO:0000255" key="3"/>
<evidence type="ECO:0000256" key="4">
    <source>
        <dbReference type="SAM" id="MobiDB-lite"/>
    </source>
</evidence>
<evidence type="ECO:0000269" key="5">
    <source>
    </source>
</evidence>
<evidence type="ECO:0000269" key="6">
    <source>
    </source>
</evidence>
<evidence type="ECO:0000269" key="7">
    <source>
    </source>
</evidence>
<evidence type="ECO:0000269" key="8">
    <source>
    </source>
</evidence>
<evidence type="ECO:0000269" key="9">
    <source>
    </source>
</evidence>
<evidence type="ECO:0000269" key="10">
    <source>
    </source>
</evidence>
<evidence type="ECO:0000269" key="11">
    <source>
    </source>
</evidence>
<evidence type="ECO:0000269" key="12">
    <source>
    </source>
</evidence>
<evidence type="ECO:0000269" key="13">
    <source>
    </source>
</evidence>
<evidence type="ECO:0000269" key="14">
    <source>
    </source>
</evidence>
<evidence type="ECO:0000269" key="15">
    <source>
    </source>
</evidence>
<evidence type="ECO:0000269" key="16">
    <source>
    </source>
</evidence>
<evidence type="ECO:0000303" key="17">
    <source>
    </source>
</evidence>
<evidence type="ECO:0000303" key="18">
    <source>
    </source>
</evidence>
<evidence type="ECO:0000305" key="19"/>
<evidence type="ECO:0000305" key="20">
    <source>
    </source>
</evidence>
<evidence type="ECO:0007744" key="21">
    <source>
    </source>
</evidence>
<evidence type="ECO:0007744" key="22">
    <source>
    </source>
</evidence>
<evidence type="ECO:0007744" key="23">
    <source>
    </source>
</evidence>
<evidence type="ECO:0007744" key="24">
    <source>
    </source>
</evidence>
<evidence type="ECO:0007744" key="25">
    <source>
    </source>
</evidence>
<evidence type="ECO:0007744" key="26">
    <source>
    </source>
</evidence>
<evidence type="ECO:0007829" key="27">
    <source>
        <dbReference type="PDB" id="3WOY"/>
    </source>
</evidence>
<evidence type="ECO:0007829" key="28">
    <source>
        <dbReference type="PDB" id="5NR4"/>
    </source>
</evidence>
<comment type="function">
    <text evidence="5 6 8 9 10 11 13 14">Microtubule plus-end tracking protein that promotes the stabilization of dynamic microtubules (PubMed:26003921). Involved in the nucleation of noncentrosomal microtubules originating from the trans-Golgi network (TGN). Required for the polarization of the cytoplasmic microtubule arrays in migrating cells towards the leading edge of the cell. May act at the cell cortex to enhance the frequency of rescue of depolymerizing microtubules by attaching their plus-ends to cortical platforms composed of ERC1 and PHLDB2 (PubMed:16824950). This cortical microtubule stabilizing activity is regulated at least in part by phosphatidylinositol 3-kinase signaling. Also performs a similar stabilizing function at the kinetochore which is essential for the bipolar alignment of chromosomes on the mitotic spindle (PubMed:16866869, PubMed:16914514). Acts as a mediator of ERBB2-dependent stabilization of microtubules at the cell cortex.</text>
</comment>
<comment type="subunit">
    <text evidence="1 5 6 7 8 11 12 16">Interacts with microtubules (PubMed:11290329, PubMed:15631994, PubMed:15955847, PubMed:26003921). Interacts with MAPRE1; probably required for targeting to the growing microtubule plus ends (PubMed:15631994, PubMed:19632184, PubMed:26003921). Interacts with CLIP2, ERC1, MAPRE3, PHLDB2 and RSN (PubMed:11290329, PubMed:15631994). The interaction with ERC1 may be mediated by PHLDB2 (PubMed:16824950). Interacts with GCC2; recruits CLASP2 to Golgi membranes (PubMed:17543864). Interacts with MACF1 (By similarity). Interacts with mtcl2 and MTCL1 (PubMed:33587225).</text>
</comment>
<comment type="interaction">
    <interactant intactId="EBI-913524">
        <id>O75122</id>
    </interactant>
    <interactant intactId="EBI-1004115">
        <id>Q15691</id>
        <label>MAPRE1</label>
    </interactant>
    <organismsDiffer>false</organismsDiffer>
    <experiments>5</experiments>
</comment>
<comment type="interaction">
    <interactant intactId="EBI-913524">
        <id>O75122</id>
    </interactant>
    <interactant intactId="EBI-476295">
        <id>P31947</id>
        <label>SFN</label>
    </interactant>
    <organismsDiffer>false</organismsDiffer>
    <experiments>4</experiments>
</comment>
<comment type="interaction">
    <interactant intactId="EBI-913524">
        <id>O75122</id>
    </interactant>
    <interactant intactId="EBI-356498">
        <id>P62258</id>
        <label>YWHAE</label>
    </interactant>
    <organismsDiffer>false</organismsDiffer>
    <experiments>8</experiments>
</comment>
<comment type="interaction">
    <interactant intactId="EBI-913524">
        <id>O75122</id>
    </interactant>
    <interactant intactId="EBI-349416">
        <id>O55156</id>
        <label>Clip2</label>
    </interactant>
    <organismsDiffer>true</organismsDiffer>
    <experiments>3</experiments>
</comment>
<comment type="subcellular location">
    <subcellularLocation>
        <location evidence="6 13">Cytoplasm</location>
        <location evidence="6 13">Cytoskeleton</location>
    </subcellularLocation>
    <subcellularLocation>
        <location evidence="10">Cytoplasm</location>
        <location evidence="10">Cytoskeleton</location>
        <location evidence="10">Microtubule organizing center</location>
        <location evidence="10">Centrosome</location>
    </subcellularLocation>
    <subcellularLocation>
        <location evidence="9 10">Chromosome</location>
        <location evidence="9 10">Centromere</location>
        <location evidence="9 10">Kinetochore</location>
    </subcellularLocation>
    <subcellularLocation>
        <location evidence="9 10">Cytoplasm</location>
        <location evidence="9 10">Cytoskeleton</location>
        <location evidence="9 10">Spindle</location>
    </subcellularLocation>
    <subcellularLocation>
        <location evidence="1">Golgi apparatus</location>
    </subcellularLocation>
    <subcellularLocation>
        <location evidence="11">Golgi apparatus</location>
        <location evidence="11">trans-Golgi network</location>
    </subcellularLocation>
    <subcellularLocation>
        <location evidence="13">Cell membrane</location>
    </subcellularLocation>
    <subcellularLocation>
        <location evidence="13">Cell projection</location>
        <location evidence="13">Ruffle membrane</location>
    </subcellularLocation>
    <subcellularLocation>
        <location evidence="15">Cytoplasm</location>
        <location evidence="15">Cell cortex</location>
    </subcellularLocation>
    <text evidence="6 8 9 10 13 15">Localizes to microtubule plus ends (PubMed:15631994). Localizes to centrosomes, kinetochores and the mitotic spindle from prometaphase. Subsequently localizes to the spindle midzone from anaphase and to the midbody from telophase (PubMed:16866869, PubMed:16914514). In migrating cells localizes to the plus ends of microtubules within the cell body and to the entire microtubule lattice within the lamella. Localizes to the cell cortex and this requires ERC1 and PHLDB2 (PubMed:16824950). Colocalizes with KANK1 at the cell cortex, likely recruited in cortical microtubule stabilization complexes (CMSC) at focal adhesions rims (PubMed:27410476). The MEMO1-RHOA-DIAPH1 signaling pathway controls localization of the phosphorylated form to the cell membrane.</text>
</comment>
<comment type="alternative products">
    <event type="alternative splicing"/>
    <isoform>
        <id>O75122-1</id>
        <name>1</name>
        <name>CLASP2 gamma</name>
        <sequence type="displayed"/>
    </isoform>
    <isoform>
        <id>O75122-2</id>
        <name>2</name>
        <name>CLASP2 beta</name>
        <sequence type="described" ref="VSP_015805 VSP_015806 VSP_015807"/>
    </isoform>
    <isoform>
        <id>O75122-3</id>
        <name>3</name>
        <sequence type="described" ref="VSP_057273 VSP_057274 VSP_057275 VSP_057276"/>
    </isoform>
    <text>Additional isoforms exist.</text>
</comment>
<comment type="tissue specificity">
    <text>Brain-specific.</text>
</comment>
<comment type="domain">
    <text evidence="12">The two SXIP sequence motifs mediate interaction with MAPRE1; this is necessary for targeting to growing microtubule plus ends.</text>
</comment>
<comment type="domain">
    <text evidence="14">Two TOG regions display structural characteristics similar to HEAT repeat domains and mediate interaction with microtubules.</text>
</comment>
<comment type="PTM">
    <text evidence="7 20">Phosphorylated by GSK3B. Phosphorylation reduces MAPRE1 binding (PubMed:26003921). Phosphorylation by GSK3B may negatively regulate binding to microtubule lattices in lamella.</text>
</comment>
<comment type="similarity">
    <text evidence="19">Belongs to the CLASP family.</text>
</comment>
<comment type="sequence caution" evidence="19">
    <conflict type="erroneous initiation">
        <sequence resource="EMBL-CDS" id="BAA31602"/>
    </conflict>
    <text>Extended N-terminus.</text>
</comment>
<comment type="sequence caution" evidence="19">
    <conflict type="erroneous initiation">
        <sequence resource="EMBL-CDS" id="BAB14995"/>
    </conflict>
    <text>Truncated N-terminus.</text>
</comment>
<organism>
    <name type="scientific">Homo sapiens</name>
    <name type="common">Human</name>
    <dbReference type="NCBI Taxonomy" id="9606"/>
    <lineage>
        <taxon>Eukaryota</taxon>
        <taxon>Metazoa</taxon>
        <taxon>Chordata</taxon>
        <taxon>Craniata</taxon>
        <taxon>Vertebrata</taxon>
        <taxon>Euteleostomi</taxon>
        <taxon>Mammalia</taxon>
        <taxon>Eutheria</taxon>
        <taxon>Euarchontoglires</taxon>
        <taxon>Primates</taxon>
        <taxon>Haplorrhini</taxon>
        <taxon>Catarrhini</taxon>
        <taxon>Hominidae</taxon>
        <taxon>Homo</taxon>
    </lineage>
</organism>
<gene>
    <name type="primary">CLASP2</name>
    <name type="synonym">KIAA0627</name>
</gene>
<feature type="chain" id="PRO_0000089849" description="CLIP-associating protein 2">
    <location>
        <begin position="1"/>
        <end position="1294"/>
    </location>
</feature>
<feature type="repeat" description="HEAT 1" evidence="3">
    <location>
        <begin position="173"/>
        <end position="208"/>
    </location>
</feature>
<feature type="repeat" description="HEAT 2" evidence="3">
    <location>
        <begin position="209"/>
        <end position="245"/>
    </location>
</feature>
<feature type="repeat" description="HEAT 3" evidence="3">
    <location>
        <begin position="250"/>
        <end position="287"/>
    </location>
</feature>
<feature type="repeat" description="HEAT 4" evidence="3">
    <location>
        <begin position="710"/>
        <end position="747"/>
    </location>
</feature>
<feature type="repeat" description="HEAT 5" evidence="3">
    <location>
        <begin position="772"/>
        <end position="809"/>
    </location>
</feature>
<feature type="repeat" description="HEAT 6" evidence="3">
    <location>
        <begin position="1054"/>
        <end position="1091"/>
    </location>
</feature>
<feature type="repeat" description="HEAT 7" evidence="3">
    <location>
        <begin position="1098"/>
        <end position="1135"/>
    </location>
</feature>
<feature type="repeat" description="HEAT 8" evidence="3">
    <location>
        <begin position="1216"/>
        <end position="1253"/>
    </location>
</feature>
<feature type="region of interest" description="Disordered" evidence="4">
    <location>
        <begin position="1"/>
        <end position="61"/>
    </location>
</feature>
<feature type="region of interest" description="TOG 1" evidence="14">
    <location>
        <begin position="60"/>
        <end position="311"/>
    </location>
</feature>
<feature type="region of interest" description="Disordered" evidence="4">
    <location>
        <begin position="314"/>
        <end position="368"/>
    </location>
</feature>
<feature type="region of interest" description="Disordered" evidence="4">
    <location>
        <begin position="409"/>
        <end position="467"/>
    </location>
</feature>
<feature type="region of interest" description="Interaction with microtubules, MAPRE1 and MAPRE3" evidence="6">
    <location>
        <begin position="444"/>
        <end position="580"/>
    </location>
</feature>
<feature type="region of interest" description="Disordered" evidence="4">
    <location>
        <begin position="488"/>
        <end position="557"/>
    </location>
</feature>
<feature type="region of interest" description="Disordered" evidence="4">
    <location>
        <begin position="617"/>
        <end position="645"/>
    </location>
</feature>
<feature type="region of interest" description="TOG 2" evidence="14">
    <location>
        <begin position="649"/>
        <end position="881"/>
    </location>
</feature>
<feature type="region of interest" description="Interaction with RSN and localization to the Golgi and kinetochores">
    <location>
        <begin position="872"/>
        <end position="1294"/>
    </location>
</feature>
<feature type="region of interest" description="Disordered" evidence="4">
    <location>
        <begin position="878"/>
        <end position="928"/>
    </location>
</feature>
<feature type="region of interest" description="Disordered" evidence="4">
    <location>
        <begin position="952"/>
        <end position="995"/>
    </location>
</feature>
<feature type="region of interest" description="Required for cortical localization">
    <location>
        <begin position="1017"/>
        <end position="1294"/>
    </location>
</feature>
<feature type="short sequence motif" description="SXIP motif 1; mediates interaction with MAPRE1 and targeting to microtubule plus ends" evidence="12 14">
    <location>
        <begin position="494"/>
        <end position="497"/>
    </location>
</feature>
<feature type="short sequence motif" description="SXIP motif 2; mediates interaction with MAPRE1 and targeting to microtubule plus ends" evidence="12 14">
    <location>
        <begin position="517"/>
        <end position="520"/>
    </location>
</feature>
<feature type="compositionally biased region" description="Gly residues" evidence="4">
    <location>
        <begin position="47"/>
        <end position="61"/>
    </location>
</feature>
<feature type="compositionally biased region" description="Low complexity" evidence="4">
    <location>
        <begin position="316"/>
        <end position="334"/>
    </location>
</feature>
<feature type="compositionally biased region" description="Polar residues" evidence="4">
    <location>
        <begin position="335"/>
        <end position="346"/>
    </location>
</feature>
<feature type="compositionally biased region" description="Polar residues" evidence="4">
    <location>
        <begin position="353"/>
        <end position="367"/>
    </location>
</feature>
<feature type="compositionally biased region" description="Basic and acidic residues" evidence="4">
    <location>
        <begin position="411"/>
        <end position="425"/>
    </location>
</feature>
<feature type="compositionally biased region" description="Low complexity" evidence="4">
    <location>
        <begin position="453"/>
        <end position="467"/>
    </location>
</feature>
<feature type="compositionally biased region" description="Low complexity" evidence="4">
    <location>
        <begin position="627"/>
        <end position="641"/>
    </location>
</feature>
<feature type="compositionally biased region" description="Polar residues" evidence="4">
    <location>
        <begin position="880"/>
        <end position="892"/>
    </location>
</feature>
<feature type="compositionally biased region" description="Polar residues" evidence="4">
    <location>
        <begin position="901"/>
        <end position="922"/>
    </location>
</feature>
<feature type="compositionally biased region" description="Basic and acidic residues" evidence="4">
    <location>
        <begin position="955"/>
        <end position="972"/>
    </location>
</feature>
<feature type="modified residue" description="Phosphoserine" evidence="24">
    <location>
        <position position="8"/>
    </location>
</feature>
<feature type="modified residue" description="Phosphoserine" evidence="2">
    <location>
        <position position="14"/>
    </location>
</feature>
<feature type="modified residue" description="Phosphoserine" evidence="26">
    <location>
        <position position="316"/>
    </location>
</feature>
<feature type="modified residue" description="Phosphoserine" evidence="25">
    <location>
        <position position="327"/>
    </location>
</feature>
<feature type="modified residue" description="Phosphoserine" evidence="25">
    <location>
        <position position="330"/>
    </location>
</feature>
<feature type="modified residue" description="Phosphoserine" evidence="25">
    <location>
        <position position="360"/>
    </location>
</feature>
<feature type="modified residue" description="Phosphoserine" evidence="1">
    <location>
        <position position="368"/>
    </location>
</feature>
<feature type="modified residue" description="Phosphoserine" evidence="21 22 24 25">
    <location>
        <position position="370"/>
    </location>
</feature>
<feature type="modified residue" description="Phosphoserine" evidence="2">
    <location>
        <position position="407"/>
    </location>
</feature>
<feature type="modified residue" description="Phosphoserine" evidence="24">
    <location>
        <position position="455"/>
    </location>
</feature>
<feature type="modified residue" description="Phosphoserine" evidence="25">
    <location>
        <position position="459"/>
    </location>
</feature>
<feature type="modified residue" description="Phosphoserine" evidence="25">
    <location>
        <position position="463"/>
    </location>
</feature>
<feature type="modified residue" description="Phosphoserine" evidence="25">
    <location>
        <position position="478"/>
    </location>
</feature>
<feature type="modified residue" description="Phosphoserine" evidence="25">
    <location>
        <position position="489"/>
    </location>
</feature>
<feature type="modified residue" description="Phosphoserine" evidence="25">
    <location>
        <position position="507"/>
    </location>
</feature>
<feature type="modified residue" description="Phosphoserine" evidence="21 25">
    <location>
        <position position="525"/>
    </location>
</feature>
<feature type="modified residue" description="Phosphoserine" evidence="21 25">
    <location>
        <position position="529"/>
    </location>
</feature>
<feature type="modified residue" description="Phosphoserine" evidence="25">
    <location>
        <position position="585"/>
    </location>
</feature>
<feature type="modified residue" description="Phosphoserine" evidence="25">
    <location>
        <position position="587"/>
    </location>
</feature>
<feature type="modified residue" description="Phosphoserine" evidence="21 22 24 25">
    <location>
        <position position="596"/>
    </location>
</feature>
<feature type="modified residue" description="Phosphoserine" evidence="25">
    <location>
        <position position="621"/>
    </location>
</feature>
<feature type="modified residue" description="Phosphoserine" evidence="1">
    <location>
        <position position="627"/>
    </location>
</feature>
<feature type="modified residue" description="Phosphothreonine" evidence="25">
    <location>
        <position position="787"/>
    </location>
</feature>
<feature type="modified residue" description="Phosphoserine" evidence="25">
    <location>
        <position position="892"/>
    </location>
</feature>
<feature type="modified residue" description="Phosphoserine" evidence="25">
    <location>
        <position position="952"/>
    </location>
</feature>
<feature type="modified residue" description="Phosphoserine" evidence="25">
    <location>
        <position position="955"/>
    </location>
</feature>
<feature type="modified residue" description="Phosphoserine" evidence="25">
    <location>
        <position position="1013"/>
    </location>
</feature>
<feature type="modified residue" description="Phosphoserine" evidence="21 22 23 25">
    <location>
        <position position="1029"/>
    </location>
</feature>
<feature type="splice variant" id="VSP_015805" description="In isoform 2." evidence="17 18">
    <original>MAMGDD</original>
    <variation>MRRLICKRICDY</variation>
    <location>
        <begin position="1"/>
        <end position="6"/>
    </location>
</feature>
<feature type="splice variant" id="VSP_057273" description="In isoform 3." evidence="18">
    <original>MAMGD</original>
    <variation>MEPRSMEYFCAQVQQKDVGGRLQVGQELLLYLGAPGAISDLEEDLGRLGKTVDALTGWVGSSNYRVSLMGLEILSAFVDRLSTRFKSYVAMVIVALIDRMGDAKDKVRDEAQTLILKLMDQVAPPMYIWEQLASGFKHKNFRSREGVCLCLIETLNIFGAQPLVISKLIPHLCILFGDSNSQVRDAAILAIVEIYRHVGEKVRMDLYKRGIPPARLEMIFAKFDEVQSSGGMILSVCK</variation>
    <location>
        <begin position="1"/>
        <end position="5"/>
    </location>
</feature>
<feature type="splice variant" id="VSP_057274" description="In isoform 3." evidence="18">
    <original>G</original>
    <variation>GA</variation>
    <location>
        <position position="54"/>
    </location>
</feature>
<feature type="splice variant" id="VSP_015806" description="In isoform 2." evidence="17 18">
    <original>DTSDKLDGTASEDGRV</original>
    <variation>CEAFWRSGRTAKLYSV</variation>
    <location>
        <begin position="410"/>
        <end position="425"/>
    </location>
</feature>
<feature type="splice variant" id="VSP_015807" description="In isoform 2." evidence="17 18">
    <location>
        <begin position="426"/>
        <end position="1294"/>
    </location>
</feature>
<feature type="splice variant" id="VSP_057275" description="In isoform 3." evidence="18">
    <location>
        <begin position="550"/>
        <end position="570"/>
    </location>
</feature>
<feature type="splice variant" id="VSP_057276" description="In isoform 3." evidence="18">
    <original>L</original>
    <variation>LLLGDIRTK</variation>
    <location>
        <position position="606"/>
    </location>
</feature>
<feature type="mutagenesis site" description="Decreases affinity for microtubules; when associated with A-191; E-667; E-833; A-838 and A-839." evidence="14">
    <original>W</original>
    <variation>E</variation>
    <location>
        <position position="106"/>
    </location>
</feature>
<feature type="mutagenesis site" description="Decreases affinity for microtubules; when associated with E-106; E-667; E-833; A-838 and A-839." evidence="14">
    <original>K</original>
    <variation>A</variation>
    <location>
        <position position="191"/>
    </location>
</feature>
<feature type="mutagenesis site" description="No effect on MAPRE1 binding. Abolishes interaction with MAPRE1; when associated with 519-A-A-520." evidence="14">
    <original>IP</original>
    <variation>AA</variation>
    <location>
        <begin position="496"/>
        <end position="497"/>
    </location>
</feature>
<feature type="mutagenesis site" description="Reduced targeting to the growing microtubule plus ends. Loss of interaction with MAPRE1 and targeting to the growing microtubule plus ends; when associated with 519-S-S-520." evidence="12">
    <original>IP</original>
    <variation>SS</variation>
    <location>
        <begin position="496"/>
        <end position="497"/>
    </location>
</feature>
<feature type="mutagenesis site" description="Phosphomimetic mutant that reduces MAPRE1 binding; when associated with D-503; D-507; D-525; D-529; D-533; D-537 and D-541." evidence="14">
    <original>S</original>
    <variation>D</variation>
    <location>
        <position position="499"/>
    </location>
</feature>
<feature type="mutagenesis site" description="Phosphomimetic mutant that reduces MAPRE1 binding; when associated with D-499; D-507; D-525; D-529; D-533; D-537 and D-541." evidence="14">
    <original>S</original>
    <variation>D</variation>
    <location>
        <position position="503"/>
    </location>
</feature>
<feature type="mutagenesis site" description="Phosphomimetic mutant that reduces MAPRE1 binding; when associated with D-499; D-503; D-525; D-529; D-533; D-537 and D-541." evidence="14">
    <original>S</original>
    <variation>D</variation>
    <location>
        <position position="507"/>
    </location>
</feature>
<feature type="mutagenesis site" description="No effect on MAPRE1 binding. Abolishes interaction with MAPRE1; when associated with 496-A-A-497." evidence="14">
    <original>IP</original>
    <variation>AA</variation>
    <location>
        <begin position="519"/>
        <end position="520"/>
    </location>
</feature>
<feature type="mutagenesis site" description="Reduced targeting to the growing microtubule plus ends. Loss of interaction with MAPRE1 and targeting to the growing microtubule plus ends; when associated with 496-S-S-497." evidence="12">
    <original>IP</original>
    <variation>SS</variation>
    <location>
        <begin position="519"/>
        <end position="520"/>
    </location>
</feature>
<feature type="mutagenesis site" description="Phosphomimetic mutant that reduces MAPRE1 binding; when associated with D-499; D-503; D-507; D-529; D-533; D-537 and D-541." evidence="14">
    <original>S</original>
    <variation>D</variation>
    <location>
        <position position="525"/>
    </location>
</feature>
<feature type="mutagenesis site" description="Phosphomimetic mutant that reduces MAPRE1 binding; when associated with D-499; D-503; D-507; D-525; D-533; D-537 and D-541." evidence="14">
    <original>S</original>
    <variation>D</variation>
    <location>
        <position position="529"/>
    </location>
</feature>
<feature type="mutagenesis site" description="Phosphomimetic mutant that reduces MAPRE1 binding; when associated with D-499; D-503; D-507; D-525; D-529; D-537 and D-541." evidence="14">
    <original>S</original>
    <variation>D</variation>
    <location>
        <position position="533"/>
    </location>
</feature>
<feature type="mutagenesis site" description="Phosphomimetic mutant that reduces MAPRE1 binding; when associated with D-499; D-503; D-507; D-525; D-529; D-533 and D-541." evidence="14">
    <original>S</original>
    <variation>D</variation>
    <location>
        <position position="537"/>
    </location>
</feature>
<feature type="mutagenesis site" description="Phosphomimetic mutant that reduces MAPRE1 binding; when associated with D-499; D-503; D-507; D-525; D-529; D-533 and D-537." evidence="14">
    <original>S</original>
    <variation>D</variation>
    <location>
        <position position="541"/>
    </location>
</feature>
<feature type="mutagenesis site" description="Decreases affinity for microtubules; when associated with E-106; A-191; E-833; A-838 and A-839." evidence="14">
    <original>W</original>
    <variation>E</variation>
    <location>
        <position position="667"/>
    </location>
</feature>
<feature type="mutagenesis site" description="Decreases affinity for microtubules; when associated with E-106; A-191; E-667; A-838 and A-839." evidence="14">
    <original>K</original>
    <variation>E</variation>
    <location>
        <position position="833"/>
    </location>
</feature>
<feature type="mutagenesis site" description="Decreases affinity for microtubules; when associated with E-106; A-191; E-667; E-833 and A-839." evidence="14">
    <original>R</original>
    <variation>A</variation>
    <location>
        <position position="838"/>
    </location>
</feature>
<feature type="mutagenesis site" description="Decreases affinity for microtubules; when associated with E-106; A-191; E-667; E-833 and A-838." evidence="14">
    <original>K</original>
    <variation>A</variation>
    <location>
        <position position="839"/>
    </location>
</feature>
<feature type="helix" evidence="27">
    <location>
        <begin position="64"/>
        <end position="75"/>
    </location>
</feature>
<feature type="helix" evidence="27">
    <location>
        <begin position="85"/>
        <end position="100"/>
    </location>
</feature>
<feature type="helix" evidence="27">
    <location>
        <begin position="106"/>
        <end position="121"/>
    </location>
</feature>
<feature type="helix" evidence="27">
    <location>
        <begin position="124"/>
        <end position="126"/>
    </location>
</feature>
<feature type="helix" evidence="27">
    <location>
        <begin position="128"/>
        <end position="136"/>
    </location>
</feature>
<feature type="helix" evidence="27">
    <location>
        <begin position="138"/>
        <end position="144"/>
    </location>
</feature>
<feature type="helix" evidence="27">
    <location>
        <begin position="150"/>
        <end position="167"/>
    </location>
</feature>
<feature type="helix" evidence="27">
    <location>
        <begin position="168"/>
        <end position="171"/>
    </location>
</feature>
<feature type="helix" evidence="27">
    <location>
        <begin position="172"/>
        <end position="185"/>
    </location>
</feature>
<feature type="helix" evidence="27">
    <location>
        <begin position="191"/>
        <end position="207"/>
    </location>
</feature>
<feature type="helix" evidence="27">
    <location>
        <begin position="213"/>
        <end position="220"/>
    </location>
</feature>
<feature type="helix" evidence="27">
    <location>
        <begin position="226"/>
        <end position="242"/>
    </location>
</feature>
<feature type="helix" evidence="27">
    <location>
        <begin position="245"/>
        <end position="248"/>
    </location>
</feature>
<feature type="helix" evidence="27">
    <location>
        <begin position="249"/>
        <end position="251"/>
    </location>
</feature>
<feature type="helix" evidence="27">
    <location>
        <begin position="252"/>
        <end position="263"/>
    </location>
</feature>
<feature type="helix" evidence="27">
    <location>
        <begin position="268"/>
        <end position="284"/>
    </location>
</feature>
<feature type="helix" evidence="27">
    <location>
        <begin position="286"/>
        <end position="294"/>
    </location>
</feature>
<feature type="helix" evidence="27">
    <location>
        <begin position="298"/>
        <end position="303"/>
    </location>
</feature>
<feature type="helix" evidence="28">
    <location>
        <begin position="1116"/>
        <end position="1133"/>
    </location>
</feature>
<feature type="helix" evidence="28">
    <location>
        <begin position="1134"/>
        <end position="1140"/>
    </location>
</feature>
<feature type="helix" evidence="28">
    <location>
        <begin position="1141"/>
        <end position="1151"/>
    </location>
</feature>
<feature type="helix" evidence="28">
    <location>
        <begin position="1157"/>
        <end position="1173"/>
    </location>
</feature>
<feature type="helix" evidence="28">
    <location>
        <begin position="1177"/>
        <end position="1183"/>
    </location>
</feature>
<feature type="helix" evidence="28">
    <location>
        <begin position="1184"/>
        <end position="1188"/>
    </location>
</feature>
<feature type="helix" evidence="28">
    <location>
        <begin position="1192"/>
        <end position="1209"/>
    </location>
</feature>
<feature type="helix" evidence="28">
    <location>
        <begin position="1218"/>
        <end position="1228"/>
    </location>
</feature>
<feature type="helix" evidence="28">
    <location>
        <begin position="1234"/>
        <end position="1251"/>
    </location>
</feature>
<feature type="helix" evidence="28">
    <location>
        <begin position="1254"/>
        <end position="1259"/>
    </location>
</feature>
<feature type="helix" evidence="28">
    <location>
        <begin position="1266"/>
        <end position="1275"/>
    </location>
</feature>